<dbReference type="EMBL" id="CP000038">
    <property type="protein sequence ID" value="AAZ88318.1"/>
    <property type="molecule type" value="Genomic_DNA"/>
</dbReference>
<dbReference type="RefSeq" id="WP_000271372.1">
    <property type="nucleotide sequence ID" value="NC_007384.1"/>
</dbReference>
<dbReference type="SMR" id="Q3Z1P4"/>
<dbReference type="GeneID" id="93775660"/>
<dbReference type="KEGG" id="ssn:SSON_1623"/>
<dbReference type="HOGENOM" id="CLU_2842804_0_0_6"/>
<dbReference type="Proteomes" id="UP000002529">
    <property type="component" value="Chromosome"/>
</dbReference>
<dbReference type="GO" id="GO:0005886">
    <property type="term" value="C:plasma membrane"/>
    <property type="evidence" value="ECO:0007669"/>
    <property type="project" value="UniProtKB-SubCell"/>
</dbReference>
<dbReference type="InterPro" id="IPR031411">
    <property type="entry name" value="SafA"/>
</dbReference>
<dbReference type="Pfam" id="PF17073">
    <property type="entry name" value="SafA"/>
    <property type="match status" value="1"/>
</dbReference>
<evidence type="ECO:0000250" key="1"/>
<evidence type="ECO:0000255" key="2"/>
<evidence type="ECO:0000305" key="3"/>
<feature type="chain" id="PRO_0000223721" description="Two-component-system connector protein SafA">
    <location>
        <begin position="1"/>
        <end position="65"/>
    </location>
</feature>
<feature type="topological domain" description="Cytoplasmic" evidence="1">
    <location>
        <begin position="1"/>
        <end position="18"/>
    </location>
</feature>
<feature type="transmembrane region" description="Helical; Signal-anchor for type II membrane protein" evidence="2">
    <location>
        <begin position="19"/>
        <end position="39"/>
    </location>
</feature>
<feature type="topological domain" description="Periplasmic" evidence="1">
    <location>
        <begin position="40"/>
        <end position="65"/>
    </location>
</feature>
<keyword id="KW-0997">Cell inner membrane</keyword>
<keyword id="KW-1003">Cell membrane</keyword>
<keyword id="KW-0472">Membrane</keyword>
<keyword id="KW-1185">Reference proteome</keyword>
<keyword id="KW-0735">Signal-anchor</keyword>
<keyword id="KW-0346">Stress response</keyword>
<keyword id="KW-0812">Transmembrane</keyword>
<keyword id="KW-1133">Transmembrane helix</keyword>
<protein>
    <recommendedName>
        <fullName>Two-component-system connector protein SafA</fullName>
    </recommendedName>
</protein>
<comment type="function">
    <text evidence="1">Connects the signal transduction between the two-component systems EvgS/EvgA and PhoQ/PhoP, by directly interacting with PhoQ and thus activating the PhoQ/PhoP system, in response to acid stress conditions.</text>
</comment>
<comment type="subunit">
    <text evidence="1">Interacts with PhoQ.</text>
</comment>
<comment type="subcellular location">
    <subcellularLocation>
        <location evidence="1">Cell inner membrane</location>
        <topology evidence="1">Single-pass type II membrane protein</topology>
    </subcellularLocation>
</comment>
<comment type="induction">
    <text evidence="1">By acid stress, via the EvgS/EvgA system.</text>
</comment>
<comment type="similarity">
    <text evidence="3">Belongs to the SafA family.</text>
</comment>
<proteinExistence type="inferred from homology"/>
<gene>
    <name type="primary">safA</name>
    <name type="ordered locus">SSON_1623</name>
</gene>
<organism>
    <name type="scientific">Shigella sonnei (strain Ss046)</name>
    <dbReference type="NCBI Taxonomy" id="300269"/>
    <lineage>
        <taxon>Bacteria</taxon>
        <taxon>Pseudomonadati</taxon>
        <taxon>Pseudomonadota</taxon>
        <taxon>Gammaproteobacteria</taxon>
        <taxon>Enterobacterales</taxon>
        <taxon>Enterobacteriaceae</taxon>
        <taxon>Shigella</taxon>
    </lineage>
</organism>
<sequence length="65" mass="7354">MYATTVKNKITQRDNYKEIMSVIVVVLLLTLTLIAIFSAIDQLGISEMGRIARDLTHFIINSLQD</sequence>
<reference key="1">
    <citation type="journal article" date="2005" name="Nucleic Acids Res.">
        <title>Genome dynamics and diversity of Shigella species, the etiologic agents of bacillary dysentery.</title>
        <authorList>
            <person name="Yang F."/>
            <person name="Yang J."/>
            <person name="Zhang X."/>
            <person name="Chen L."/>
            <person name="Jiang Y."/>
            <person name="Yan Y."/>
            <person name="Tang X."/>
            <person name="Wang J."/>
            <person name="Xiong Z."/>
            <person name="Dong J."/>
            <person name="Xue Y."/>
            <person name="Zhu Y."/>
            <person name="Xu X."/>
            <person name="Sun L."/>
            <person name="Chen S."/>
            <person name="Nie H."/>
            <person name="Peng J."/>
            <person name="Xu J."/>
            <person name="Wang Y."/>
            <person name="Yuan Z."/>
            <person name="Wen Y."/>
            <person name="Yao Z."/>
            <person name="Shen Y."/>
            <person name="Qiang B."/>
            <person name="Hou Y."/>
            <person name="Yu J."/>
            <person name="Jin Q."/>
        </authorList>
    </citation>
    <scope>NUCLEOTIDE SEQUENCE [LARGE SCALE GENOMIC DNA]</scope>
    <source>
        <strain>Ss046</strain>
    </source>
</reference>
<name>SAFA_SHISS</name>
<accession>Q3Z1P4</accession>